<feature type="chain" id="PRO_0000066735" description="Neurotoxin 5">
    <location>
        <begin position="1"/>
        <end position="24" status="greater than"/>
    </location>
</feature>
<feature type="domain" description="LCN-type CS-alpha/beta" evidence="1">
    <location>
        <begin position="2"/>
        <end position="24" status="greater than"/>
    </location>
</feature>
<feature type="non-terminal residue">
    <location>
        <position position="24"/>
    </location>
</feature>
<name>SCX5_BUTOC</name>
<accession>P04097</accession>
<reference key="1">
    <citation type="journal article" date="1984" name="Toxicon">
        <title>Purification of thirteen toxins active on mice from the venom of the North African scorpion Buthus occitanus tunetanus.</title>
        <authorList>
            <person name="Martin M.-F."/>
            <person name="Rochat H."/>
        </authorList>
    </citation>
    <scope>PROTEIN SEQUENCE</scope>
    <scope>SUBCELLULAR LOCATION</scope>
    <source>
        <tissue>Venom</tissue>
    </source>
</reference>
<keyword id="KW-0903">Direct protein sequencing</keyword>
<keyword id="KW-0872">Ion channel impairing toxin</keyword>
<keyword id="KW-0528">Neurotoxin</keyword>
<keyword id="KW-0964">Secreted</keyword>
<keyword id="KW-0800">Toxin</keyword>
<keyword id="KW-0738">Voltage-gated sodium channel impairing toxin</keyword>
<organism>
    <name type="scientific">Buthus occitanus tunetanus</name>
    <name type="common">Common European scorpion</name>
    <name type="synonym">Buthus tunetanus</name>
    <dbReference type="NCBI Taxonomy" id="6871"/>
    <lineage>
        <taxon>Eukaryota</taxon>
        <taxon>Metazoa</taxon>
        <taxon>Ecdysozoa</taxon>
        <taxon>Arthropoda</taxon>
        <taxon>Chelicerata</taxon>
        <taxon>Arachnida</taxon>
        <taxon>Scorpiones</taxon>
        <taxon>Buthida</taxon>
        <taxon>Buthoidea</taxon>
        <taxon>Buthidae</taxon>
        <taxon>Buthus</taxon>
    </lineage>
</organism>
<sequence>VRDAYIAQNYNCVYTCFKNDYCND</sequence>
<dbReference type="PIR" id="A05134">
    <property type="entry name" value="A05134"/>
</dbReference>
<dbReference type="GO" id="GO:0005576">
    <property type="term" value="C:extracellular region"/>
    <property type="evidence" value="ECO:0007669"/>
    <property type="project" value="UniProtKB-SubCell"/>
</dbReference>
<dbReference type="GO" id="GO:0019871">
    <property type="term" value="F:sodium channel inhibitor activity"/>
    <property type="evidence" value="ECO:0007669"/>
    <property type="project" value="InterPro"/>
</dbReference>
<dbReference type="GO" id="GO:0090729">
    <property type="term" value="F:toxin activity"/>
    <property type="evidence" value="ECO:0007669"/>
    <property type="project" value="UniProtKB-KW"/>
</dbReference>
<dbReference type="Gene3D" id="3.30.30.10">
    <property type="entry name" value="Knottin, scorpion toxin-like"/>
    <property type="match status" value="1"/>
</dbReference>
<dbReference type="InterPro" id="IPR044062">
    <property type="entry name" value="LCN-type_CS_alpha_beta_dom"/>
</dbReference>
<dbReference type="InterPro" id="IPR036574">
    <property type="entry name" value="Scorpion_toxin-like_sf"/>
</dbReference>
<dbReference type="InterPro" id="IPR002061">
    <property type="entry name" value="Scorpion_toxinL/defensin"/>
</dbReference>
<dbReference type="Pfam" id="PF00537">
    <property type="entry name" value="Toxin_3"/>
    <property type="match status" value="1"/>
</dbReference>
<dbReference type="SUPFAM" id="SSF57095">
    <property type="entry name" value="Scorpion toxin-like"/>
    <property type="match status" value="1"/>
</dbReference>
<dbReference type="PROSITE" id="PS51863">
    <property type="entry name" value="LCN_CSAB"/>
    <property type="match status" value="1"/>
</dbReference>
<protein>
    <recommendedName>
        <fullName>Neurotoxin 5</fullName>
    </recommendedName>
    <alternativeName>
        <fullName>Neurotoxin V</fullName>
    </alternativeName>
</protein>
<comment type="function">
    <text>Binds to sodium channels (Nav) and inhibits the inactivation of the activated channels, thereby blocking neuronal transmission.</text>
</comment>
<comment type="subcellular location">
    <subcellularLocation>
        <location evidence="2">Secreted</location>
    </subcellularLocation>
</comment>
<comment type="tissue specificity">
    <text evidence="4">Expressed by the venom gland.</text>
</comment>
<comment type="domain">
    <text evidence="3">Has the structural arrangement of an alpha-helix connected to antiparallel beta-sheets by disulfide bonds (CS-alpha/beta).</text>
</comment>
<comment type="similarity">
    <text evidence="3">Belongs to the long (4 C-C) scorpion toxin superfamily. Sodium channel inhibitor family. Alpha subfamily.</text>
</comment>
<evidence type="ECO:0000255" key="1">
    <source>
        <dbReference type="PROSITE-ProRule" id="PRU01210"/>
    </source>
</evidence>
<evidence type="ECO:0000269" key="2">
    <source>
    </source>
</evidence>
<evidence type="ECO:0000305" key="3"/>
<evidence type="ECO:0000305" key="4">
    <source>
    </source>
</evidence>
<proteinExistence type="evidence at protein level"/>